<accession>Q8K402</accession>
<name>TBX22_MOUSE</name>
<sequence length="517" mass="58498">MALSSRAHAFSVEALMGRPSKRKAQDPREEMQPELQEEQFVEEGEEILRSPSRDSQQPEKRLKAESSKTVFSCSDESNSQESLQEESVIQVELQGSDLWKRFHDIGTEMIITKAGRRMFPSVRIKVKGMDPVKQYYVILDVVPVDSKRYRYVYHSSQWMVAGNTDHSCITPRFYVHPDSPCSGENWMRQIISFDRVKLTNNEMDDKGHIILQSMHKYNPRVHVVEQDSRIDLSLIESFPTEGVKTFSFKETEFTTVTAYQNQQITKLKIDRNPFAKGFRDPGRNRGVLDGFLETYPWMPSFSMDFKTFVTDTQSGSSGSSPVTSSGGAPSPLNSLLSPSCSPPMVYIPPSSFGMTYPDAYLHSVNIPFCYRICPTNNWRSQPFVLPTPERLPSFIIPQTLPPLMMEVPVVSSRGIINPNSGLHEDCNGQCLQASHSANQMLYGLQNPGNIFHPNAIAQEAISYPFHPPNGCYRYTISMPPRLENVASHLSENGTSQISFTEGSCDHSHWYPAINHYL</sequence>
<proteinExistence type="evidence at transcript level"/>
<evidence type="ECO:0000255" key="1">
    <source>
        <dbReference type="PROSITE-ProRule" id="PRU00201"/>
    </source>
</evidence>
<evidence type="ECO:0000256" key="2">
    <source>
        <dbReference type="SAM" id="MobiDB-lite"/>
    </source>
</evidence>
<evidence type="ECO:0000269" key="3">
    <source>
    </source>
</evidence>
<dbReference type="EMBL" id="AF516208">
    <property type="protein sequence ID" value="AAM64167.1"/>
    <property type="molecule type" value="mRNA"/>
</dbReference>
<dbReference type="EMBL" id="AY125891">
    <property type="protein sequence ID" value="AAM94354.1"/>
    <property type="molecule type" value="mRNA"/>
</dbReference>
<dbReference type="CCDS" id="CCDS30350.1"/>
<dbReference type="RefSeq" id="NP_001277676.1">
    <property type="nucleotide sequence ID" value="NM_001290747.1"/>
</dbReference>
<dbReference type="RefSeq" id="NP_660259.1">
    <property type="nucleotide sequence ID" value="NM_145224.3"/>
</dbReference>
<dbReference type="RefSeq" id="NP_851836.2">
    <property type="nucleotide sequence ID" value="NM_181319.5"/>
</dbReference>
<dbReference type="RefSeq" id="XP_017173980.1">
    <property type="nucleotide sequence ID" value="XM_017318491.3"/>
</dbReference>
<dbReference type="SMR" id="Q8K402"/>
<dbReference type="FunCoup" id="Q8K402">
    <property type="interactions" value="1324"/>
</dbReference>
<dbReference type="STRING" id="10090.ENSMUSP00000128247"/>
<dbReference type="PhosphoSitePlus" id="Q8K402"/>
<dbReference type="PaxDb" id="10090-ENSMUSP00000128247"/>
<dbReference type="ProteomicsDB" id="263258"/>
<dbReference type="Antibodypedia" id="510">
    <property type="antibodies" value="200 antibodies from 28 providers"/>
</dbReference>
<dbReference type="DNASU" id="245572"/>
<dbReference type="Ensembl" id="ENSMUST00000118986.8">
    <property type="protein sequence ID" value="ENSMUSP00000112544.2"/>
    <property type="gene ID" value="ENSMUSG00000031241.18"/>
</dbReference>
<dbReference type="GeneID" id="245572"/>
<dbReference type="KEGG" id="mmu:245572"/>
<dbReference type="UCSC" id="uc012hnt.2">
    <property type="organism name" value="mouse"/>
</dbReference>
<dbReference type="AGR" id="MGI:2389465"/>
<dbReference type="CTD" id="50945"/>
<dbReference type="MGI" id="MGI:2389465">
    <property type="gene designation" value="Tbx22"/>
</dbReference>
<dbReference type="VEuPathDB" id="HostDB:ENSMUSG00000031241"/>
<dbReference type="eggNOG" id="KOG3586">
    <property type="taxonomic scope" value="Eukaryota"/>
</dbReference>
<dbReference type="GeneTree" id="ENSGT00940000161206"/>
<dbReference type="HOGENOM" id="CLU_030727_1_0_1"/>
<dbReference type="InParanoid" id="Q8K402"/>
<dbReference type="OrthoDB" id="7442607at2759"/>
<dbReference type="PhylomeDB" id="Q8K402"/>
<dbReference type="BioGRID-ORCS" id="245572">
    <property type="hits" value="0 hits in 77 CRISPR screens"/>
</dbReference>
<dbReference type="PRO" id="PR:Q8K402"/>
<dbReference type="Proteomes" id="UP000000589">
    <property type="component" value="Chromosome X"/>
</dbReference>
<dbReference type="RNAct" id="Q8K402">
    <property type="molecule type" value="protein"/>
</dbReference>
<dbReference type="Bgee" id="ENSMUSG00000031241">
    <property type="expression patterns" value="Expressed in secondary palatal shelf mesenchyme and 47 other cell types or tissues"/>
</dbReference>
<dbReference type="ExpressionAtlas" id="Q8K402">
    <property type="expression patterns" value="baseline and differential"/>
</dbReference>
<dbReference type="GO" id="GO:0005634">
    <property type="term" value="C:nucleus"/>
    <property type="evidence" value="ECO:0007669"/>
    <property type="project" value="UniProtKB-SubCell"/>
</dbReference>
<dbReference type="GO" id="GO:0003700">
    <property type="term" value="F:DNA-binding transcription factor activity"/>
    <property type="evidence" value="ECO:0007669"/>
    <property type="project" value="InterPro"/>
</dbReference>
<dbReference type="GO" id="GO:0000978">
    <property type="term" value="F:RNA polymerase II cis-regulatory region sequence-specific DNA binding"/>
    <property type="evidence" value="ECO:0007669"/>
    <property type="project" value="InterPro"/>
</dbReference>
<dbReference type="GO" id="GO:0045893">
    <property type="term" value="P:positive regulation of DNA-templated transcription"/>
    <property type="evidence" value="ECO:0007669"/>
    <property type="project" value="InterPro"/>
</dbReference>
<dbReference type="FunFam" id="2.60.40.820:FF:000001">
    <property type="entry name" value="T-box transcription factor TBX18"/>
    <property type="match status" value="1"/>
</dbReference>
<dbReference type="Gene3D" id="2.60.40.820">
    <property type="entry name" value="Transcription factor, T-box"/>
    <property type="match status" value="1"/>
</dbReference>
<dbReference type="InterPro" id="IPR008967">
    <property type="entry name" value="p53-like_TF_DNA-bd_sf"/>
</dbReference>
<dbReference type="InterPro" id="IPR046360">
    <property type="entry name" value="T-box_DNA-bd"/>
</dbReference>
<dbReference type="InterPro" id="IPR036960">
    <property type="entry name" value="T-box_sf"/>
</dbReference>
<dbReference type="InterPro" id="IPR001699">
    <property type="entry name" value="TF_T-box"/>
</dbReference>
<dbReference type="InterPro" id="IPR018186">
    <property type="entry name" value="TF_T-box_CS"/>
</dbReference>
<dbReference type="PANTHER" id="PTHR11267">
    <property type="entry name" value="T-BOX PROTEIN-RELATED"/>
    <property type="match status" value="1"/>
</dbReference>
<dbReference type="PANTHER" id="PTHR11267:SF116">
    <property type="entry name" value="T-BOX TRANSCRIPTION FACTOR TBX22"/>
    <property type="match status" value="1"/>
</dbReference>
<dbReference type="Pfam" id="PF00907">
    <property type="entry name" value="T-box"/>
    <property type="match status" value="1"/>
</dbReference>
<dbReference type="PRINTS" id="PR00937">
    <property type="entry name" value="TBOX"/>
</dbReference>
<dbReference type="SMART" id="SM00425">
    <property type="entry name" value="TBOX"/>
    <property type="match status" value="1"/>
</dbReference>
<dbReference type="SUPFAM" id="SSF49417">
    <property type="entry name" value="p53-like transcription factors"/>
    <property type="match status" value="1"/>
</dbReference>
<dbReference type="PROSITE" id="PS01283">
    <property type="entry name" value="TBOX_1"/>
    <property type="match status" value="1"/>
</dbReference>
<dbReference type="PROSITE" id="PS01264">
    <property type="entry name" value="TBOX_2"/>
    <property type="match status" value="1"/>
</dbReference>
<dbReference type="PROSITE" id="PS50252">
    <property type="entry name" value="TBOX_3"/>
    <property type="match status" value="1"/>
</dbReference>
<organism>
    <name type="scientific">Mus musculus</name>
    <name type="common">Mouse</name>
    <dbReference type="NCBI Taxonomy" id="10090"/>
    <lineage>
        <taxon>Eukaryota</taxon>
        <taxon>Metazoa</taxon>
        <taxon>Chordata</taxon>
        <taxon>Craniata</taxon>
        <taxon>Vertebrata</taxon>
        <taxon>Euteleostomi</taxon>
        <taxon>Mammalia</taxon>
        <taxon>Eutheria</taxon>
        <taxon>Euarchontoglires</taxon>
        <taxon>Glires</taxon>
        <taxon>Rodentia</taxon>
        <taxon>Myomorpha</taxon>
        <taxon>Muroidea</taxon>
        <taxon>Muridae</taxon>
        <taxon>Murinae</taxon>
        <taxon>Mus</taxon>
        <taxon>Mus</taxon>
    </lineage>
</organism>
<keyword id="KW-0238">DNA-binding</keyword>
<keyword id="KW-0539">Nucleus</keyword>
<keyword id="KW-1185">Reference proteome</keyword>
<keyword id="KW-0804">Transcription</keyword>
<keyword id="KW-0805">Transcription regulation</keyword>
<reference key="1">
    <citation type="journal article" date="2002" name="Hum. Mol. Genet.">
        <title>Craniofacial expression of human and murine TBX22 correlates with the cleft palate and ankyloglossia phenotype observed in CPX patients.</title>
        <authorList>
            <person name="Braybrook C."/>
            <person name="Lisgo S."/>
            <person name="Doudney K."/>
            <person name="Henderson D."/>
            <person name="Marcano A.C.B."/>
            <person name="Strachan T."/>
            <person name="Patton M.A."/>
            <person name="Villard L."/>
            <person name="Moore G.E."/>
            <person name="Stanier P."/>
            <person name="Lindsay S."/>
        </authorList>
    </citation>
    <scope>NUCLEOTIDE SEQUENCE [MRNA]</scope>
    <source>
        <strain>C57BL/6J</strain>
    </source>
</reference>
<reference key="2">
    <citation type="journal article" date="2002" name="Dev. Dyn.">
        <title>Isolation and developmental expression analysis of Tbx22, the mouse homolog of the human X-linked cleft palate gene.</title>
        <authorList>
            <person name="Bush J.O."/>
            <person name="Lan Y."/>
            <person name="Maltby K.M."/>
            <person name="Jiang R."/>
        </authorList>
    </citation>
    <scope>NUCLEOTIDE SEQUENCE [MRNA]</scope>
    <scope>DEVELOPMENTAL STAGE</scope>
    <source>
        <strain>C57BL/6J</strain>
    </source>
</reference>
<protein>
    <recommendedName>
        <fullName>T-box transcription factor TBX22</fullName>
        <shortName>T-box protein 22</shortName>
    </recommendedName>
</protein>
<comment type="function">
    <text>Probable transcriptional regulator involved in developmental processes. This is major determinant crucial to palatogenesis.</text>
</comment>
<comment type="subcellular location">
    <subcellularLocation>
        <location evidence="1">Nucleus</location>
    </subcellularLocation>
</comment>
<comment type="developmental stage">
    <text evidence="3">Expressed in a temporally and spatially highly restricted pattern during mouse palate and tongue development.</text>
</comment>
<gene>
    <name type="primary">Tbx22</name>
</gene>
<feature type="chain" id="PRO_0000184456" description="T-box transcription factor TBX22">
    <location>
        <begin position="1"/>
        <end position="517"/>
    </location>
</feature>
<feature type="DNA-binding region" description="T-box" evidence="1">
    <location>
        <begin position="93"/>
        <end position="280"/>
    </location>
</feature>
<feature type="region of interest" description="Disordered" evidence="2">
    <location>
        <begin position="1"/>
        <end position="83"/>
    </location>
</feature>
<feature type="region of interest" description="Disordered" evidence="2">
    <location>
        <begin position="312"/>
        <end position="333"/>
    </location>
</feature>
<feature type="compositionally biased region" description="Acidic residues" evidence="2">
    <location>
        <begin position="35"/>
        <end position="45"/>
    </location>
</feature>
<feature type="compositionally biased region" description="Basic and acidic residues" evidence="2">
    <location>
        <begin position="46"/>
        <end position="66"/>
    </location>
</feature>
<feature type="compositionally biased region" description="Low complexity" evidence="2">
    <location>
        <begin position="74"/>
        <end position="83"/>
    </location>
</feature>
<feature type="compositionally biased region" description="Low complexity" evidence="2">
    <location>
        <begin position="314"/>
        <end position="333"/>
    </location>
</feature>